<name>TSC1_RAT</name>
<gene>
    <name evidence="7 10" type="primary">Tsc1</name>
</gene>
<keyword id="KW-0143">Chaperone</keyword>
<keyword id="KW-0175">Coiled coil</keyword>
<keyword id="KW-0963">Cytoplasm</keyword>
<keyword id="KW-1017">Isopeptide bond</keyword>
<keyword id="KW-0458">Lysosome</keyword>
<keyword id="KW-0472">Membrane</keyword>
<keyword id="KW-0597">Phosphoprotein</keyword>
<keyword id="KW-1185">Reference proteome</keyword>
<keyword id="KW-0043">Tumor suppressor</keyword>
<keyword id="KW-0832">Ubl conjugation</keyword>
<dbReference type="EMBL" id="AB011821">
    <property type="protein sequence ID" value="BAA75254.1"/>
    <property type="molecule type" value="mRNA"/>
</dbReference>
<dbReference type="RefSeq" id="NP_068626.1">
    <property type="nucleotide sequence ID" value="NM_021854.3"/>
</dbReference>
<dbReference type="RefSeq" id="XP_006233905.1">
    <property type="nucleotide sequence ID" value="XM_006233843.2"/>
</dbReference>
<dbReference type="RefSeq" id="XP_006233906.1">
    <property type="nucleotide sequence ID" value="XM_006233844.4"/>
</dbReference>
<dbReference type="RefSeq" id="XP_006233907.1">
    <property type="nucleotide sequence ID" value="XM_006233845.4"/>
</dbReference>
<dbReference type="RefSeq" id="XP_006233908.1">
    <property type="nucleotide sequence ID" value="XM_006233846.4"/>
</dbReference>
<dbReference type="RefSeq" id="XP_006233909.1">
    <property type="nucleotide sequence ID" value="XM_006233847.5"/>
</dbReference>
<dbReference type="RefSeq" id="XP_038961700.1">
    <property type="nucleotide sequence ID" value="XM_039105772.2"/>
</dbReference>
<dbReference type="RefSeq" id="XP_063140545.1">
    <property type="nucleotide sequence ID" value="XM_063284475.1"/>
</dbReference>
<dbReference type="SMR" id="Q9Z136"/>
<dbReference type="BioGRID" id="248838">
    <property type="interactions" value="6"/>
</dbReference>
<dbReference type="FunCoup" id="Q9Z136">
    <property type="interactions" value="3689"/>
</dbReference>
<dbReference type="IntAct" id="Q9Z136">
    <property type="interactions" value="1"/>
</dbReference>
<dbReference type="STRING" id="10116.ENSRNOP00000016904"/>
<dbReference type="GlyGen" id="Q9Z136">
    <property type="glycosylation" value="2 sites"/>
</dbReference>
<dbReference type="iPTMnet" id="Q9Z136"/>
<dbReference type="PhosphoSitePlus" id="Q9Z136"/>
<dbReference type="PaxDb" id="10116-ENSRNOP00000016904"/>
<dbReference type="GeneID" id="60445"/>
<dbReference type="KEGG" id="rno:60445"/>
<dbReference type="UCSC" id="RGD:620124">
    <property type="organism name" value="rat"/>
</dbReference>
<dbReference type="AGR" id="RGD:620124"/>
<dbReference type="CTD" id="7248"/>
<dbReference type="RGD" id="620124">
    <property type="gene designation" value="Tsc1"/>
</dbReference>
<dbReference type="VEuPathDB" id="HostDB:ENSRNOG00000011470"/>
<dbReference type="eggNOG" id="ENOG502QQPT">
    <property type="taxonomic scope" value="Eukaryota"/>
</dbReference>
<dbReference type="HOGENOM" id="CLU_011546_0_0_1"/>
<dbReference type="InParanoid" id="Q9Z136"/>
<dbReference type="OrthoDB" id="6022054at2759"/>
<dbReference type="PhylomeDB" id="Q9Z136"/>
<dbReference type="TreeFam" id="TF325466"/>
<dbReference type="Reactome" id="R-RNO-1632852">
    <property type="pathway name" value="Macroautophagy"/>
</dbReference>
<dbReference type="Reactome" id="R-RNO-165181">
    <property type="pathway name" value="Inhibition of TSC complex formation by PKB"/>
</dbReference>
<dbReference type="Reactome" id="R-RNO-380972">
    <property type="pathway name" value="Energy dependent regulation of mTOR by LKB1-AMPK"/>
</dbReference>
<dbReference type="Reactome" id="R-RNO-5628897">
    <property type="pathway name" value="TP53 Regulates Metabolic Genes"/>
</dbReference>
<dbReference type="Reactome" id="R-RNO-8854214">
    <property type="pathway name" value="TBC/RABGAPs"/>
</dbReference>
<dbReference type="PRO" id="PR:Q9Z136"/>
<dbReference type="Proteomes" id="UP000002494">
    <property type="component" value="Chromosome 3"/>
</dbReference>
<dbReference type="Bgee" id="ENSRNOG00000011470">
    <property type="expression patterns" value="Expressed in skeletal muscle tissue and 18 other cell types or tissues"/>
</dbReference>
<dbReference type="GO" id="GO:0005884">
    <property type="term" value="C:actin filament"/>
    <property type="evidence" value="ECO:0000266"/>
    <property type="project" value="RGD"/>
</dbReference>
<dbReference type="GO" id="GO:0005938">
    <property type="term" value="C:cell cortex"/>
    <property type="evidence" value="ECO:0000266"/>
    <property type="project" value="RGD"/>
</dbReference>
<dbReference type="GO" id="GO:0042995">
    <property type="term" value="C:cell projection"/>
    <property type="evidence" value="ECO:0000314"/>
    <property type="project" value="RGD"/>
</dbReference>
<dbReference type="GO" id="GO:0005737">
    <property type="term" value="C:cytoplasm"/>
    <property type="evidence" value="ECO:0000266"/>
    <property type="project" value="RGD"/>
</dbReference>
<dbReference type="GO" id="GO:0005829">
    <property type="term" value="C:cytosol"/>
    <property type="evidence" value="ECO:0000250"/>
    <property type="project" value="UniProtKB"/>
</dbReference>
<dbReference type="GO" id="GO:0030426">
    <property type="term" value="C:growth cone"/>
    <property type="evidence" value="ECO:0000314"/>
    <property type="project" value="RGD"/>
</dbReference>
<dbReference type="GO" id="GO:0030027">
    <property type="term" value="C:lamellipodium"/>
    <property type="evidence" value="ECO:0000266"/>
    <property type="project" value="RGD"/>
</dbReference>
<dbReference type="GO" id="GO:0005765">
    <property type="term" value="C:lysosomal membrane"/>
    <property type="evidence" value="ECO:0000250"/>
    <property type="project" value="UniProtKB"/>
</dbReference>
<dbReference type="GO" id="GO:0016020">
    <property type="term" value="C:membrane"/>
    <property type="evidence" value="ECO:0000266"/>
    <property type="project" value="RGD"/>
</dbReference>
<dbReference type="GO" id="GO:0005634">
    <property type="term" value="C:nucleus"/>
    <property type="evidence" value="ECO:0000314"/>
    <property type="project" value="ParkinsonsUK-UCL"/>
</dbReference>
<dbReference type="GO" id="GO:0048471">
    <property type="term" value="C:perinuclear region of cytoplasm"/>
    <property type="evidence" value="ECO:0000314"/>
    <property type="project" value="ParkinsonsUK-UCL"/>
</dbReference>
<dbReference type="GO" id="GO:0014069">
    <property type="term" value="C:postsynaptic density"/>
    <property type="evidence" value="ECO:0000266"/>
    <property type="project" value="RGD"/>
</dbReference>
<dbReference type="GO" id="GO:0101031">
    <property type="term" value="C:protein folding chaperone complex"/>
    <property type="evidence" value="ECO:0000266"/>
    <property type="project" value="RGD"/>
</dbReference>
<dbReference type="GO" id="GO:0032991">
    <property type="term" value="C:protein-containing complex"/>
    <property type="evidence" value="ECO:0000266"/>
    <property type="project" value="RGD"/>
</dbReference>
<dbReference type="GO" id="GO:0033596">
    <property type="term" value="C:TSC1-TSC2 complex"/>
    <property type="evidence" value="ECO:0000250"/>
    <property type="project" value="UniProtKB"/>
</dbReference>
<dbReference type="GO" id="GO:0042030">
    <property type="term" value="F:ATPase inhibitor activity"/>
    <property type="evidence" value="ECO:0000266"/>
    <property type="project" value="RGD"/>
</dbReference>
<dbReference type="GO" id="GO:0030544">
    <property type="term" value="F:Hsp70 protein binding"/>
    <property type="evidence" value="ECO:0000266"/>
    <property type="project" value="RGD"/>
</dbReference>
<dbReference type="GO" id="GO:0051879">
    <property type="term" value="F:Hsp90 protein binding"/>
    <property type="evidence" value="ECO:0000266"/>
    <property type="project" value="RGD"/>
</dbReference>
<dbReference type="GO" id="GO:0044183">
    <property type="term" value="F:protein folding chaperone"/>
    <property type="evidence" value="ECO:0000266"/>
    <property type="project" value="RGD"/>
</dbReference>
<dbReference type="GO" id="GO:0051087">
    <property type="term" value="F:protein-folding chaperone binding"/>
    <property type="evidence" value="ECO:0000266"/>
    <property type="project" value="RGD"/>
</dbReference>
<dbReference type="GO" id="GO:0002250">
    <property type="term" value="P:adaptive immune response"/>
    <property type="evidence" value="ECO:0000266"/>
    <property type="project" value="RGD"/>
</dbReference>
<dbReference type="GO" id="GO:0008344">
    <property type="term" value="P:adult locomotory behavior"/>
    <property type="evidence" value="ECO:0000315"/>
    <property type="project" value="ParkinsonsUK-UCL"/>
</dbReference>
<dbReference type="GO" id="GO:0008306">
    <property type="term" value="P:associative learning"/>
    <property type="evidence" value="ECO:0000266"/>
    <property type="project" value="RGD"/>
</dbReference>
<dbReference type="GO" id="GO:0055007">
    <property type="term" value="P:cardiac muscle cell differentiation"/>
    <property type="evidence" value="ECO:0000266"/>
    <property type="project" value="RGD"/>
</dbReference>
<dbReference type="GO" id="GO:0008283">
    <property type="term" value="P:cell population proliferation"/>
    <property type="evidence" value="ECO:0000266"/>
    <property type="project" value="RGD"/>
</dbReference>
<dbReference type="GO" id="GO:0030030">
    <property type="term" value="P:cell projection organization"/>
    <property type="evidence" value="ECO:0000266"/>
    <property type="project" value="RGD"/>
</dbReference>
<dbReference type="GO" id="GO:0007160">
    <property type="term" value="P:cell-matrix adhesion"/>
    <property type="evidence" value="ECO:0000266"/>
    <property type="project" value="RGD"/>
</dbReference>
<dbReference type="GO" id="GO:0036294">
    <property type="term" value="P:cellular response to decreased oxygen levels"/>
    <property type="evidence" value="ECO:0000315"/>
    <property type="project" value="ParkinsonsUK-UCL"/>
</dbReference>
<dbReference type="GO" id="GO:0009267">
    <property type="term" value="P:cellular response to starvation"/>
    <property type="evidence" value="ECO:0000250"/>
    <property type="project" value="UniProtKB"/>
</dbReference>
<dbReference type="GO" id="GO:0021987">
    <property type="term" value="P:cerebral cortex development"/>
    <property type="evidence" value="ECO:0000266"/>
    <property type="project" value="RGD"/>
</dbReference>
<dbReference type="GO" id="GO:0046323">
    <property type="term" value="P:D-glucose import"/>
    <property type="evidence" value="ECO:0000266"/>
    <property type="project" value="RGD"/>
</dbReference>
<dbReference type="GO" id="GO:0021766">
    <property type="term" value="P:hippocampus development"/>
    <property type="evidence" value="ECO:0000266"/>
    <property type="project" value="RGD"/>
</dbReference>
<dbReference type="GO" id="GO:0001822">
    <property type="term" value="P:kidney development"/>
    <property type="evidence" value="ECO:0000266"/>
    <property type="project" value="RGD"/>
</dbReference>
<dbReference type="GO" id="GO:0043379">
    <property type="term" value="P:memory T cell differentiation"/>
    <property type="evidence" value="ECO:0000266"/>
    <property type="project" value="RGD"/>
</dbReference>
<dbReference type="GO" id="GO:0042552">
    <property type="term" value="P:myelination"/>
    <property type="evidence" value="ECO:0000266"/>
    <property type="project" value="RGD"/>
</dbReference>
<dbReference type="GO" id="GO:0008285">
    <property type="term" value="P:negative regulation of cell population proliferation"/>
    <property type="evidence" value="ECO:0000315"/>
    <property type="project" value="RGD"/>
</dbReference>
<dbReference type="GO" id="GO:0045792">
    <property type="term" value="P:negative regulation of cell size"/>
    <property type="evidence" value="ECO:0000266"/>
    <property type="project" value="RGD"/>
</dbReference>
<dbReference type="GO" id="GO:1900408">
    <property type="term" value="P:negative regulation of cellular response to oxidative stress"/>
    <property type="evidence" value="ECO:0000315"/>
    <property type="project" value="RGD"/>
</dbReference>
<dbReference type="GO" id="GO:0016242">
    <property type="term" value="P:negative regulation of macroautophagy"/>
    <property type="evidence" value="ECO:0000315"/>
    <property type="project" value="ParkinsonsUK-UCL"/>
</dbReference>
<dbReference type="GO" id="GO:0010977">
    <property type="term" value="P:negative regulation of neuron projection development"/>
    <property type="evidence" value="ECO:0000315"/>
    <property type="project" value="RGD"/>
</dbReference>
<dbReference type="GO" id="GO:0032007">
    <property type="term" value="P:negative regulation of TOR signaling"/>
    <property type="evidence" value="ECO:0000315"/>
    <property type="project" value="ParkinsonsUK-UCL"/>
</dbReference>
<dbReference type="GO" id="GO:1904262">
    <property type="term" value="P:negative regulation of TORC1 signaling"/>
    <property type="evidence" value="ECO:0000250"/>
    <property type="project" value="UniProtKB"/>
</dbReference>
<dbReference type="GO" id="GO:0007399">
    <property type="term" value="P:nervous system development"/>
    <property type="evidence" value="ECO:0000266"/>
    <property type="project" value="RGD"/>
</dbReference>
<dbReference type="GO" id="GO:0001843">
    <property type="term" value="P:neural tube closure"/>
    <property type="evidence" value="ECO:0000266"/>
    <property type="project" value="RGD"/>
</dbReference>
<dbReference type="GO" id="GO:0051894">
    <property type="term" value="P:positive regulation of focal adhesion assembly"/>
    <property type="evidence" value="ECO:0000266"/>
    <property type="project" value="RGD"/>
</dbReference>
<dbReference type="GO" id="GO:0016239">
    <property type="term" value="P:positive regulation of macroautophagy"/>
    <property type="evidence" value="ECO:0000314"/>
    <property type="project" value="RGD"/>
</dbReference>
<dbReference type="GO" id="GO:0051496">
    <property type="term" value="P:positive regulation of stress fiber assembly"/>
    <property type="evidence" value="ECO:0000315"/>
    <property type="project" value="RGD"/>
</dbReference>
<dbReference type="GO" id="GO:0006813">
    <property type="term" value="P:potassium ion transport"/>
    <property type="evidence" value="ECO:0000266"/>
    <property type="project" value="RGD"/>
</dbReference>
<dbReference type="GO" id="GO:0050821">
    <property type="term" value="P:protein stabilization"/>
    <property type="evidence" value="ECO:0000266"/>
    <property type="project" value="RGD"/>
</dbReference>
<dbReference type="GO" id="GO:0051726">
    <property type="term" value="P:regulation of cell cycle"/>
    <property type="evidence" value="ECO:0000318"/>
    <property type="project" value="GO_Central"/>
</dbReference>
<dbReference type="GO" id="GO:0001952">
    <property type="term" value="P:regulation of cell-matrix adhesion"/>
    <property type="evidence" value="ECO:0000266"/>
    <property type="project" value="RGD"/>
</dbReference>
<dbReference type="GO" id="GO:0051893">
    <property type="term" value="P:regulation of focal adhesion assembly"/>
    <property type="evidence" value="ECO:0000315"/>
    <property type="project" value="RGD"/>
</dbReference>
<dbReference type="GO" id="GO:0051492">
    <property type="term" value="P:regulation of stress fiber assembly"/>
    <property type="evidence" value="ECO:0000266"/>
    <property type="project" value="RGD"/>
</dbReference>
<dbReference type="GO" id="GO:0032868">
    <property type="term" value="P:response to insulin"/>
    <property type="evidence" value="ECO:0000266"/>
    <property type="project" value="RGD"/>
</dbReference>
<dbReference type="GO" id="GO:0031667">
    <property type="term" value="P:response to nutrient levels"/>
    <property type="evidence" value="ECO:0000270"/>
    <property type="project" value="RGD"/>
</dbReference>
<dbReference type="GO" id="GO:1901652">
    <property type="term" value="P:response to peptide"/>
    <property type="evidence" value="ECO:0000270"/>
    <property type="project" value="RGD"/>
</dbReference>
<dbReference type="GO" id="GO:0050808">
    <property type="term" value="P:synapse organization"/>
    <property type="evidence" value="ECO:0000266"/>
    <property type="project" value="RGD"/>
</dbReference>
<dbReference type="InterPro" id="IPR016024">
    <property type="entry name" value="ARM-type_fold"/>
</dbReference>
<dbReference type="InterPro" id="IPR007483">
    <property type="entry name" value="Hamartin"/>
</dbReference>
<dbReference type="PANTHER" id="PTHR15154">
    <property type="entry name" value="HAMARTIN"/>
    <property type="match status" value="1"/>
</dbReference>
<dbReference type="PANTHER" id="PTHR15154:SF2">
    <property type="entry name" value="HAMARTIN"/>
    <property type="match status" value="1"/>
</dbReference>
<dbReference type="Pfam" id="PF04388">
    <property type="entry name" value="Hamartin"/>
    <property type="match status" value="1"/>
</dbReference>
<dbReference type="SUPFAM" id="SSF48371">
    <property type="entry name" value="ARM repeat"/>
    <property type="match status" value="1"/>
</dbReference>
<protein>
    <recommendedName>
        <fullName evidence="8">Hamartin</fullName>
    </recommendedName>
    <alternativeName>
        <fullName evidence="7">Tuberous sclerosis 1 protein homolog</fullName>
    </alternativeName>
</protein>
<proteinExistence type="evidence at protein level"/>
<comment type="function">
    <text evidence="1 6">Non-catalytic component of the TSC-TBC complex, a multiprotein complex that acts as a negative regulator of the canonical mTORC1 complex, an evolutionarily conserved central nutrient sensor that stimulates anabolic reactions and macromolecule biosynthesis to promote cellular biomass generation and growth (By similarity). The TSC-TBC complex acts as a GTPase-activating protein (GAP) for the small GTPase RHEB, a direct activator of the protein kinase activity of mTORC1 (By similarity). In absence of nutrients, the TSC-TBC complex inhibits mTORC1, thereby preventing phosphorylation of ribosomal protein S6 kinase (RPS6KB1 and RPS6KB2) and EIF4EBP1 (4E-BP1) by the mTORC1 signaling (By similarity). The TSC-TBC complex is inactivated in response to nutrients, relieving inhibition of mTORC1 (By similarity). Within the TSC-TBC complex, TSC1 stabilizes TSC2 and prevents TSC2 self-aggregation (PubMed:16707451). Involved in microtubule-mediated protein transport via its ability to regulate mTORC1 signaling (PubMed:16707451). Also acts as a co-chaperone for HSP90AA1 facilitating HSP90AA1 chaperoning of protein clients such as kinases, TSC2 and glucocorticoid receptor NR3C1 (By similarity). Increases ATP binding to HSP90AA1 and inhibits HSP90AA1 ATPase activity (By similarity). Competes with the activating co-chaperone AHSA1 for binding to HSP90AA1, thereby providing a reciprocal regulatory mechanism for chaperoning of client proteins (By similarity). Recruits TSC2 to HSP90AA1 and stabilizes TSC2 by preventing the interaction between TSC2 and ubiquitin ligase HERC1 (By similarity).</text>
</comment>
<comment type="subunit">
    <text evidence="1 9">Component of the TSC-TBC complex (also named Rhebulator complex), composed of 2 molecules of TSC1, 2 molecules of TSC2 and 1 molecule of TBC1D7 (Probable) (PubMed:9809973). Probably forms a complex composed of chaperones HSP90 and HSP70, co-chaperones STIP1/HOP, CDC37, PPP5C, PTGES3/p23, TSC1 and client protein TSC2 (By similarity). Forms a complex composed of chaperones HSP90 and HSP70, co-chaperones CDC37, PPP5C, TSC1 and client protein TSC2, CDK4, AKT, RAF1 and NR3C1; this complex does not contain co-chaperones STIP1/HOP and PTGES3/p23 (By similarity). Forms a complex containing HSP90AA1, TSC1 and TSC2; TSC1 is required to recruit TCS2 to the complex (By similarity). Interacts (via C-terminus) with the closed form of HSP90AA1 (via the middle domain and TPR repeat-binding motif) (By similarity). Interacts with DOCK7 (By similarity). Interacts with FBXW5 (By similarity). Interacts with WDR45B. Interacts with RPAP3 and URI1 (By similarity).</text>
</comment>
<comment type="subcellular location">
    <subcellularLocation>
        <location evidence="1">Lysosome membrane</location>
        <topology evidence="1">Peripheral membrane protein</topology>
    </subcellularLocation>
    <subcellularLocation>
        <location evidence="1">Cytoplasm</location>
        <location evidence="1">Cytosol</location>
    </subcellularLocation>
    <text evidence="1">Recruited to lysosomal membranes in a RHEB-dependent process in absence of nutrients. In response to nutrients, the complex dissociates from lysosomal membranes and relocalizes to the cytosol.</text>
</comment>
<comment type="tissue specificity">
    <text evidence="5">Highly expressed in brain, spleen and kidney, followed by liver and heart.</text>
</comment>
<comment type="domain">
    <text evidence="1">The C-terminal putative coiled-coil domain is necessary for interaction with TSC2.</text>
</comment>
<comment type="PTM">
    <text evidence="1">Phosphorylation at Ser-505 does not affect interaction with TSC2.</text>
</comment>
<comment type="PTM">
    <text evidence="1">'Lys-63'-linked ubiquitinated at Lys-30 by PELI1; the ubiquitination promotes TSC1/TSC2 complex stability.</text>
</comment>
<sequence length="1163" mass="129022">MAQLANIGELLSMLDSSTLGVRDDVTTIFKESLNSERGPMLVNTLVDYYLETNSQPVLHILTTLQEPHDKHLLDKMNEYVGKAATRLSILSLLGHVVRLQPSWKHKLSQAPLLPSLLKCLKMDTDVVVLTTGVLVLITMLPMIPQSGKQHLLDFFDIFGRLSSWCLKKPGHVTEVYLVHLHASVYALFHRLYGMYPCNFVSFLRSHYSMKENVETFEEVVKPMMEHVRIHPELVTGSKDHELDPRRWKTLETHDVVIECAKISLDPTEASYEDGDAVSHQLSACFPHRSADVTTSSYVDTQNSYGGATSTPSSTSRLMLFSTPGQLPQSLSSLSTRPLPEPLQASLWSPSAVCGMTTPPTSPGNVPADLSHPYSKAFGTTTGGKGTPSGTPATSPPPAPPCPQDDCAHGPASQASATPPRKEERADSSRPYLPRQQDVPSDRGLEDLPGSKGSVTLRNLPDFLGDLASEEDSIEKDKEEAAISKELSEITTAEADPVAPRGGFDSPFYRDSLSGSQRKTHSAASGTQGFSVNPEPLHSSLDKHGPDTPKQAFTPIDPPSGSADASPAGDRDRQTSLETSILTPSPCKIPPQRGVSFGSGQLPPYDHLFEVALPKTACHFVSKKTEELLKKAKGNPEEDCVPSTSPMEVLDRLLEQGAGAHSKELSRLSLPSKSVDWTHFGGSPPSDEIRTLRDQLLLLHNQLLYERFKRQQHALRNRRLLRKVIRAAALEEHNAAMKDQLKLQEKDIQMWKVSLQKEQARYSQLQQQRDTMVTQLHSQIRQLQHDREEFYNQSQELQTKLEDCRSMIAELRVELKKANSKVCHTELLLSQVSQKLSNSESVQQQMEFLNRQLLVLGEVNELYLEQLQSKHPDTTKEVEMMKTAYRKELEKNRSHLLQQNQRLDASQRRVLELESLLAKKDHLLLEQKKYLEDVKSQASGQLLAAESRYEAQRKITRVLELEILDLYGRLEKDGRLQKLEEDRAEAAEAAEERLDCCTDGCSDSLLGHNEEAAGHNGETRTSRPGGTRASCGGRVTGGSSSSSSELSTPEKPPNQRFSSRWEPTMGEPSSSIPTTVGSLPSSKSFLGMKTRELFRNKSESQCDEDGMTMSSFSETLKTELGKDSAGMENKTPPSLDAPHPSSPSSDSMGQLHIMDYNETHHEHS</sequence>
<evidence type="ECO:0000250" key="1">
    <source>
        <dbReference type="UniProtKB" id="Q92574"/>
    </source>
</evidence>
<evidence type="ECO:0000250" key="2">
    <source>
        <dbReference type="UniProtKB" id="Q9EP53"/>
    </source>
</evidence>
<evidence type="ECO:0000255" key="3"/>
<evidence type="ECO:0000256" key="4">
    <source>
        <dbReference type="SAM" id="MobiDB-lite"/>
    </source>
</evidence>
<evidence type="ECO:0000269" key="5">
    <source>
    </source>
</evidence>
<evidence type="ECO:0000269" key="6">
    <source>
    </source>
</evidence>
<evidence type="ECO:0000303" key="7">
    <source>
    </source>
</evidence>
<evidence type="ECO:0000303" key="8">
    <source>
    </source>
</evidence>
<evidence type="ECO:0000305" key="9">
    <source>
    </source>
</evidence>
<evidence type="ECO:0000312" key="10">
    <source>
        <dbReference type="RGD" id="620124"/>
    </source>
</evidence>
<organism>
    <name type="scientific">Rattus norvegicus</name>
    <name type="common">Rat</name>
    <dbReference type="NCBI Taxonomy" id="10116"/>
    <lineage>
        <taxon>Eukaryota</taxon>
        <taxon>Metazoa</taxon>
        <taxon>Chordata</taxon>
        <taxon>Craniata</taxon>
        <taxon>Vertebrata</taxon>
        <taxon>Euteleostomi</taxon>
        <taxon>Mammalia</taxon>
        <taxon>Eutheria</taxon>
        <taxon>Euarchontoglires</taxon>
        <taxon>Glires</taxon>
        <taxon>Rodentia</taxon>
        <taxon>Myomorpha</taxon>
        <taxon>Muroidea</taxon>
        <taxon>Muridae</taxon>
        <taxon>Murinae</taxon>
        <taxon>Rattus</taxon>
    </lineage>
</organism>
<reference key="1">
    <citation type="journal article" date="1999" name="Cancer Res.">
        <title>Isolation and characterization of a rat homologue of the human tuberous sclerosis 1 gene (Tsc1) and analysis of its mutations in rat renal carcinomas.</title>
        <authorList>
            <person name="Satake N."/>
            <person name="Kobayashi T."/>
            <person name="Kobayashi E."/>
            <person name="Izumi K."/>
            <person name="Hino O."/>
        </authorList>
    </citation>
    <scope>NUCLEOTIDE SEQUENCE [MRNA]</scope>
    <scope>TISSUE SPECIFICITY</scope>
    <scope>MUTAGENESIS OF HIS-287; VAL-674; ARG-1027 AND MET-1106</scope>
    <source>
        <strain>Long Evans</strain>
        <tissue>Kidney</tissue>
    </source>
</reference>
<reference key="2">
    <citation type="journal article" date="1998" name="Cancer Res.">
        <title>Hamartin, the product of the tuberous sclerosis 1 (TSC1) gene, interacts with tuberin and appears to be localized to cytoplasmic vesicles.</title>
        <authorList>
            <person name="Plank T.L."/>
            <person name="Yeung R.S."/>
            <person name="Henske E.P."/>
        </authorList>
    </citation>
    <scope>INTERACTION WITH TSC2</scope>
</reference>
<reference key="3">
    <citation type="journal article" date="2006" name="Cancer Res.">
        <title>Regulation of microtubule-dependent protein transport by the TSC2/mammalian target of rapamycin pathway.</title>
        <authorList>
            <person name="Jiang X."/>
            <person name="Yeung R.S."/>
        </authorList>
    </citation>
    <scope>FUNCTION</scope>
</reference>
<accession>Q9Z136</accession>
<feature type="chain" id="PRO_0000065652" description="Hamartin">
    <location>
        <begin position="1"/>
        <end position="1163"/>
    </location>
</feature>
<feature type="region of interest" description="Disordered" evidence="4">
    <location>
        <begin position="295"/>
        <end position="337"/>
    </location>
</feature>
<feature type="region of interest" description="Disordered" evidence="4">
    <location>
        <begin position="353"/>
        <end position="594"/>
    </location>
</feature>
<feature type="region of interest" description="Mediates interaction with WDR45B" evidence="1">
    <location>
        <begin position="403"/>
        <end position="787"/>
    </location>
</feature>
<feature type="region of interest" description="Disordered" evidence="4">
    <location>
        <begin position="1008"/>
        <end position="1163"/>
    </location>
</feature>
<feature type="coiled-coil region" evidence="3">
    <location>
        <begin position="721"/>
        <end position="919"/>
    </location>
</feature>
<feature type="coiled-coil region" evidence="3">
    <location>
        <begin position="970"/>
        <end position="994"/>
    </location>
</feature>
<feature type="compositionally biased region" description="Polar residues" evidence="4">
    <location>
        <begin position="295"/>
        <end position="316"/>
    </location>
</feature>
<feature type="compositionally biased region" description="Low complexity" evidence="4">
    <location>
        <begin position="321"/>
        <end position="337"/>
    </location>
</feature>
<feature type="compositionally biased region" description="Pro residues" evidence="4">
    <location>
        <begin position="393"/>
        <end position="402"/>
    </location>
</feature>
<feature type="compositionally biased region" description="Basic and acidic residues" evidence="4">
    <location>
        <begin position="474"/>
        <end position="487"/>
    </location>
</feature>
<feature type="compositionally biased region" description="Polar residues" evidence="4">
    <location>
        <begin position="512"/>
        <end position="530"/>
    </location>
</feature>
<feature type="compositionally biased region" description="Basic and acidic residues" evidence="4">
    <location>
        <begin position="1008"/>
        <end position="1020"/>
    </location>
</feature>
<feature type="compositionally biased region" description="Low complexity" evidence="4">
    <location>
        <begin position="1029"/>
        <end position="1046"/>
    </location>
</feature>
<feature type="compositionally biased region" description="Polar residues" evidence="4">
    <location>
        <begin position="1066"/>
        <end position="1083"/>
    </location>
</feature>
<feature type="compositionally biased region" description="Basic and acidic residues" evidence="4">
    <location>
        <begin position="1088"/>
        <end position="1099"/>
    </location>
</feature>
<feature type="compositionally biased region" description="Low complexity" evidence="4">
    <location>
        <begin position="1131"/>
        <end position="1146"/>
    </location>
</feature>
<feature type="compositionally biased region" description="Basic and acidic residues" evidence="4">
    <location>
        <begin position="1154"/>
        <end position="1163"/>
    </location>
</feature>
<feature type="modified residue" description="Phosphoserine" evidence="1">
    <location>
        <position position="487"/>
    </location>
</feature>
<feature type="modified residue" description="Phosphoserine" evidence="1">
    <location>
        <position position="505"/>
    </location>
</feature>
<feature type="modified residue" description="Phosphoserine" evidence="1">
    <location>
        <position position="511"/>
    </location>
</feature>
<feature type="modified residue" description="Phosphoserine" evidence="1">
    <location>
        <position position="521"/>
    </location>
</feature>
<feature type="modified residue" description="Phosphoserine" evidence="2">
    <location>
        <position position="595"/>
    </location>
</feature>
<feature type="modified residue" description="Phosphoserine" evidence="1">
    <location>
        <position position="598"/>
    </location>
</feature>
<feature type="modified residue" description="Phosphoserine" evidence="1">
    <location>
        <position position="1097"/>
    </location>
</feature>
<feature type="cross-link" description="Glycyl lysine isopeptide (Lys-Gly) (interchain with G-Cter in ubiquitin)" evidence="1">
    <location>
        <position position="30"/>
    </location>
</feature>
<feature type="mutagenesis site" description="In chemically induced renal carcinogenesis." evidence="5">
    <original>H</original>
    <variation>Q</variation>
    <location>
        <position position="287"/>
    </location>
</feature>
<feature type="mutagenesis site" description="In chemically induced renal carcinogenesis." evidence="5">
    <original>V</original>
    <variation>L</variation>
    <location>
        <position position="674"/>
    </location>
</feature>
<feature type="mutagenesis site" description="In chemically induced renal carcinogenesis." evidence="5">
    <original>R</original>
    <variation>W</variation>
    <location>
        <position position="1027"/>
    </location>
</feature>
<feature type="mutagenesis site" description="In chemically induced renal carcinogenesis." evidence="5">
    <original>M</original>
    <variation>V</variation>
    <location>
        <position position="1106"/>
    </location>
</feature>